<protein>
    <recommendedName>
        <fullName>Glycosyltransferase 8 domain-containing protein 1</fullName>
        <ecNumber>2.4.1.-</ecNumber>
    </recommendedName>
</protein>
<feature type="chain" id="PRO_0000288527" description="Glycosyltransferase 8 domain-containing protein 1">
    <location>
        <begin position="1"/>
        <end position="371"/>
    </location>
</feature>
<feature type="topological domain" description="Cytoplasmic" evidence="1">
    <location>
        <begin position="1"/>
        <end position="7"/>
    </location>
</feature>
<feature type="transmembrane region" description="Helical; Signal-anchor for type II membrane protein" evidence="1">
    <location>
        <begin position="8"/>
        <end position="28"/>
    </location>
</feature>
<feature type="topological domain" description="Lumenal" evidence="1">
    <location>
        <begin position="29"/>
        <end position="371"/>
    </location>
</feature>
<feature type="glycosylation site" description="N-linked (GlcNAc...) asparagine" evidence="1">
    <location>
        <position position="103"/>
    </location>
</feature>
<feature type="glycosylation site" description="N-linked (GlcNAc...) asparagine" evidence="1">
    <location>
        <position position="257"/>
    </location>
</feature>
<comment type="subcellular location">
    <subcellularLocation>
        <location evidence="2">Membrane</location>
        <topology evidence="2">Single-pass type II membrane protein</topology>
    </subcellularLocation>
</comment>
<comment type="similarity">
    <text evidence="2">Belongs to the glycosyltransferase 8 family.</text>
</comment>
<gene>
    <name type="primary">GLT8D1</name>
</gene>
<proteinExistence type="evidence at transcript level"/>
<evidence type="ECO:0000255" key="1"/>
<evidence type="ECO:0000305" key="2"/>
<dbReference type="EC" id="2.4.1.-"/>
<dbReference type="EMBL" id="BT020973">
    <property type="protein sequence ID" value="AAX08990.1"/>
    <property type="molecule type" value="mRNA"/>
</dbReference>
<dbReference type="EMBL" id="BC113277">
    <property type="protein sequence ID" value="AAI13278.1"/>
    <property type="molecule type" value="mRNA"/>
</dbReference>
<dbReference type="RefSeq" id="NP_001015579.1">
    <property type="nucleotide sequence ID" value="NM_001015579.1"/>
</dbReference>
<dbReference type="RefSeq" id="XP_059735593.1">
    <property type="nucleotide sequence ID" value="XM_059879610.1"/>
</dbReference>
<dbReference type="SMR" id="Q5E9E7"/>
<dbReference type="FunCoup" id="Q5E9E7">
    <property type="interactions" value="2086"/>
</dbReference>
<dbReference type="STRING" id="9913.ENSBTAP00000019340"/>
<dbReference type="CAZy" id="GT8">
    <property type="family name" value="Glycosyltransferase Family 8"/>
</dbReference>
<dbReference type="GlyCosmos" id="Q5E9E7">
    <property type="glycosylation" value="2 sites, No reported glycans"/>
</dbReference>
<dbReference type="GlyGen" id="Q5E9E7">
    <property type="glycosylation" value="2 sites"/>
</dbReference>
<dbReference type="PaxDb" id="9913-ENSBTAP00000019340"/>
<dbReference type="GeneID" id="512192"/>
<dbReference type="KEGG" id="bta:512192"/>
<dbReference type="CTD" id="55830"/>
<dbReference type="VEuPathDB" id="HostDB:ENSBTAG00000014550"/>
<dbReference type="eggNOG" id="ENOG502QTN8">
    <property type="taxonomic scope" value="Eukaryota"/>
</dbReference>
<dbReference type="HOGENOM" id="CLU_010770_0_0_1"/>
<dbReference type="InParanoid" id="Q5E9E7"/>
<dbReference type="OMA" id="YKQHSNI"/>
<dbReference type="OrthoDB" id="411524at2759"/>
<dbReference type="TreeFam" id="TF332433"/>
<dbReference type="Proteomes" id="UP000009136">
    <property type="component" value="Chromosome 22"/>
</dbReference>
<dbReference type="Bgee" id="ENSBTAG00000014550">
    <property type="expression patterns" value="Expressed in spermatocyte and 104 other cell types or tissues"/>
</dbReference>
<dbReference type="GO" id="GO:0005794">
    <property type="term" value="C:Golgi apparatus"/>
    <property type="evidence" value="ECO:0000318"/>
    <property type="project" value="GO_Central"/>
</dbReference>
<dbReference type="GO" id="GO:0016020">
    <property type="term" value="C:membrane"/>
    <property type="evidence" value="ECO:0007669"/>
    <property type="project" value="UniProtKB-SubCell"/>
</dbReference>
<dbReference type="GO" id="GO:0008194">
    <property type="term" value="F:UDP-glycosyltransferase activity"/>
    <property type="evidence" value="ECO:0007669"/>
    <property type="project" value="UniProtKB-ARBA"/>
</dbReference>
<dbReference type="CDD" id="cd06429">
    <property type="entry name" value="GT8_like_1"/>
    <property type="match status" value="1"/>
</dbReference>
<dbReference type="FunFam" id="3.90.550.10:FF:000069">
    <property type="entry name" value="Glycosyltransferase 8 domain-containing protein 1"/>
    <property type="match status" value="1"/>
</dbReference>
<dbReference type="Gene3D" id="3.90.550.10">
    <property type="entry name" value="Spore Coat Polysaccharide Biosynthesis Protein SpsA, Chain A"/>
    <property type="match status" value="1"/>
</dbReference>
<dbReference type="InterPro" id="IPR002495">
    <property type="entry name" value="Glyco_trans_8"/>
</dbReference>
<dbReference type="InterPro" id="IPR050748">
    <property type="entry name" value="Glycosyltrans_8_dom-fam"/>
</dbReference>
<dbReference type="InterPro" id="IPR029044">
    <property type="entry name" value="Nucleotide-diphossugar_trans"/>
</dbReference>
<dbReference type="PANTHER" id="PTHR13778">
    <property type="entry name" value="GLYCOSYLTRANSFERASE 8 DOMAIN-CONTAINING PROTEIN"/>
    <property type="match status" value="1"/>
</dbReference>
<dbReference type="PANTHER" id="PTHR13778:SF3">
    <property type="entry name" value="GLYCOSYLTRANSFERASE 8 DOMAIN-CONTAINING PROTEIN 1"/>
    <property type="match status" value="1"/>
</dbReference>
<dbReference type="Pfam" id="PF01501">
    <property type="entry name" value="Glyco_transf_8"/>
    <property type="match status" value="1"/>
</dbReference>
<dbReference type="SUPFAM" id="SSF53448">
    <property type="entry name" value="Nucleotide-diphospho-sugar transferases"/>
    <property type="match status" value="1"/>
</dbReference>
<name>GL8D1_BOVIN</name>
<sequence length="371" mass="41958">MSFRKVNIVILVLAVALFLLVLHHNFLGLSSLLRNEVSDSGIVGLQPVDFIPNAPQRVVDGREEEIPVVIAASEDRLGGAIAAINSIQHNTRSNVIFYIVTLNGTADHLRSWLSSSNLKRIRYKIVNFDTKLLEGKVKEDPDQGESIKPLTFARFYLPILVPRAKKAIYMDDDVIVQGDILALYNTPLKPGHAAAFSEDCDSTSAKVVIRGAGNQYNYIGYLDYKKERIRELSMKASTCSFNPGVFVANLTEWRRQNITNQLEKWMKLNVEEGLYSRTLAGSITTPPLLIVFYQQHSTIDPMWNVRHLGSSAGKRYSPQFVKAAKLLHWNGHFKPWGRTASYTDVWEKWYIPDPTGKFSLIRRHVEISNTK</sequence>
<keyword id="KW-0325">Glycoprotein</keyword>
<keyword id="KW-0328">Glycosyltransferase</keyword>
<keyword id="KW-0472">Membrane</keyword>
<keyword id="KW-1185">Reference proteome</keyword>
<keyword id="KW-0735">Signal-anchor</keyword>
<keyword id="KW-0808">Transferase</keyword>
<keyword id="KW-0812">Transmembrane</keyword>
<keyword id="KW-1133">Transmembrane helix</keyword>
<organism>
    <name type="scientific">Bos taurus</name>
    <name type="common">Bovine</name>
    <dbReference type="NCBI Taxonomy" id="9913"/>
    <lineage>
        <taxon>Eukaryota</taxon>
        <taxon>Metazoa</taxon>
        <taxon>Chordata</taxon>
        <taxon>Craniata</taxon>
        <taxon>Vertebrata</taxon>
        <taxon>Euteleostomi</taxon>
        <taxon>Mammalia</taxon>
        <taxon>Eutheria</taxon>
        <taxon>Laurasiatheria</taxon>
        <taxon>Artiodactyla</taxon>
        <taxon>Ruminantia</taxon>
        <taxon>Pecora</taxon>
        <taxon>Bovidae</taxon>
        <taxon>Bovinae</taxon>
        <taxon>Bos</taxon>
    </lineage>
</organism>
<accession>Q5E9E7</accession>
<reference key="1">
    <citation type="journal article" date="2005" name="BMC Genomics">
        <title>Characterization of 954 bovine full-CDS cDNA sequences.</title>
        <authorList>
            <person name="Harhay G.P."/>
            <person name="Sonstegard T.S."/>
            <person name="Keele J.W."/>
            <person name="Heaton M.P."/>
            <person name="Clawson M.L."/>
            <person name="Snelling W.M."/>
            <person name="Wiedmann R.T."/>
            <person name="Van Tassell C.P."/>
            <person name="Smith T.P.L."/>
        </authorList>
    </citation>
    <scope>NUCLEOTIDE SEQUENCE [LARGE SCALE MRNA]</scope>
</reference>
<reference key="2">
    <citation type="submission" date="2006-02" db="EMBL/GenBank/DDBJ databases">
        <authorList>
            <consortium name="NIH - Mammalian Gene Collection (MGC) project"/>
        </authorList>
    </citation>
    <scope>NUCLEOTIDE SEQUENCE [LARGE SCALE MRNA]</scope>
    <source>
        <strain>Hereford</strain>
        <tissue>Uterus</tissue>
    </source>
</reference>